<keyword id="KW-0472">Membrane</keyword>
<keyword id="KW-0602">Photosynthesis</keyword>
<keyword id="KW-1185">Reference proteome</keyword>
<keyword id="KW-0793">Thylakoid</keyword>
<keyword id="KW-0812">Transmembrane</keyword>
<keyword id="KW-1133">Transmembrane helix</keyword>
<evidence type="ECO:0000255" key="1">
    <source>
        <dbReference type="HAMAP-Rule" id="MF_00437"/>
    </source>
</evidence>
<comment type="function">
    <text evidence="1">Seems to be required for the assembly of the photosystem I complex.</text>
</comment>
<comment type="subcellular location">
    <subcellularLocation>
        <location evidence="1">Cellular thylakoid membrane</location>
        <topology evidence="1">Multi-pass membrane protein</topology>
    </subcellularLocation>
</comment>
<comment type="similarity">
    <text evidence="1">Belongs to the Ycf4 family.</text>
</comment>
<gene>
    <name evidence="1" type="primary">ycf4</name>
    <name type="ordered locus">Synpcc7942_0654</name>
</gene>
<organism>
    <name type="scientific">Synechococcus elongatus (strain ATCC 33912 / PCC 7942 / FACHB-805)</name>
    <name type="common">Anacystis nidulans R2</name>
    <dbReference type="NCBI Taxonomy" id="1140"/>
    <lineage>
        <taxon>Bacteria</taxon>
        <taxon>Bacillati</taxon>
        <taxon>Cyanobacteriota</taxon>
        <taxon>Cyanophyceae</taxon>
        <taxon>Synechococcales</taxon>
        <taxon>Synechococcaceae</taxon>
        <taxon>Synechococcus</taxon>
    </lineage>
</organism>
<feature type="chain" id="PRO_1000025954" description="Photosystem I assembly protein Ycf4">
    <location>
        <begin position="1"/>
        <end position="188"/>
    </location>
</feature>
<feature type="transmembrane region" description="Helical" evidence="1">
    <location>
        <begin position="26"/>
        <end position="46"/>
    </location>
</feature>
<feature type="transmembrane region" description="Helical" evidence="1">
    <location>
        <begin position="68"/>
        <end position="88"/>
    </location>
</feature>
<reference key="1">
    <citation type="submission" date="2005-08" db="EMBL/GenBank/DDBJ databases">
        <title>Complete sequence of chromosome 1 of Synechococcus elongatus PCC 7942.</title>
        <authorList>
            <consortium name="US DOE Joint Genome Institute"/>
            <person name="Copeland A."/>
            <person name="Lucas S."/>
            <person name="Lapidus A."/>
            <person name="Barry K."/>
            <person name="Detter J.C."/>
            <person name="Glavina T."/>
            <person name="Hammon N."/>
            <person name="Israni S."/>
            <person name="Pitluck S."/>
            <person name="Schmutz J."/>
            <person name="Larimer F."/>
            <person name="Land M."/>
            <person name="Kyrpides N."/>
            <person name="Lykidis A."/>
            <person name="Golden S."/>
            <person name="Richardson P."/>
        </authorList>
    </citation>
    <scope>NUCLEOTIDE SEQUENCE [LARGE SCALE GENOMIC DNA]</scope>
    <source>
        <strain>ATCC 33912 / PCC 7942 / FACHB-805</strain>
    </source>
</reference>
<protein>
    <recommendedName>
        <fullName evidence="1">Photosystem I assembly protein Ycf4</fullName>
    </recommendedName>
</protein>
<name>YCF4_SYNE7</name>
<dbReference type="EMBL" id="CP000100">
    <property type="protein sequence ID" value="ABB56686.1"/>
    <property type="molecule type" value="Genomic_DNA"/>
</dbReference>
<dbReference type="RefSeq" id="WP_011377665.1">
    <property type="nucleotide sequence ID" value="NC_007604.1"/>
</dbReference>
<dbReference type="SMR" id="Q31QI3"/>
<dbReference type="STRING" id="1140.Synpcc7942_0654"/>
<dbReference type="PaxDb" id="1140-Synpcc7942_0654"/>
<dbReference type="KEGG" id="syf:Synpcc7942_0654"/>
<dbReference type="eggNOG" id="ENOG502Z7YX">
    <property type="taxonomic scope" value="Bacteria"/>
</dbReference>
<dbReference type="HOGENOM" id="CLU_095465_0_0_3"/>
<dbReference type="OrthoDB" id="7059574at2"/>
<dbReference type="BioCyc" id="SYNEL:SYNPCC7942_0654-MONOMER"/>
<dbReference type="Proteomes" id="UP000889800">
    <property type="component" value="Chromosome"/>
</dbReference>
<dbReference type="GO" id="GO:0009522">
    <property type="term" value="C:photosystem I"/>
    <property type="evidence" value="ECO:0007669"/>
    <property type="project" value="InterPro"/>
</dbReference>
<dbReference type="GO" id="GO:0031676">
    <property type="term" value="C:plasma membrane-derived thylakoid membrane"/>
    <property type="evidence" value="ECO:0007669"/>
    <property type="project" value="UniProtKB-SubCell"/>
</dbReference>
<dbReference type="GO" id="GO:0015979">
    <property type="term" value="P:photosynthesis"/>
    <property type="evidence" value="ECO:0007669"/>
    <property type="project" value="UniProtKB-UniRule"/>
</dbReference>
<dbReference type="HAMAP" id="MF_00437">
    <property type="entry name" value="Ycf4"/>
    <property type="match status" value="1"/>
</dbReference>
<dbReference type="InterPro" id="IPR003359">
    <property type="entry name" value="PSI_Ycf4_assembly"/>
</dbReference>
<dbReference type="NCBIfam" id="NF002712">
    <property type="entry name" value="PRK02542.1"/>
    <property type="match status" value="1"/>
</dbReference>
<dbReference type="PANTHER" id="PTHR33288">
    <property type="match status" value="1"/>
</dbReference>
<dbReference type="PANTHER" id="PTHR33288:SF4">
    <property type="entry name" value="PHOTOSYSTEM I ASSEMBLY PROTEIN YCF4"/>
    <property type="match status" value="1"/>
</dbReference>
<dbReference type="Pfam" id="PF02392">
    <property type="entry name" value="Ycf4"/>
    <property type="match status" value="1"/>
</dbReference>
<proteinExistence type="inferred from homology"/>
<sequence>MPSPVATVETDSLQQPILGSRRPSNYFWAIAVSVGGTGLLLAGLSSYLQVNLLPFSEPTRLAFLPQGLVMGLYGIAAILLASYLWFVISLDVGGGYNAFDRKTQKATIFRWGFPGKNRRVEITYPLSDIQAVRVDIKEGLNPKRALYLKVKGRGDVPLTRVGQPLPLTELESQGAELARFLAVPLEGL</sequence>
<accession>Q31QI3</accession>